<proteinExistence type="inferred from homology"/>
<comment type="function">
    <text evidence="1">Component of the cytochrome b6-f complex, which mediates electron transfer between photosystem II (PSII) and photosystem I (PSI), cyclic electron flow around PSI, and state transitions.</text>
</comment>
<comment type="cofactor">
    <cofactor evidence="1">
        <name>heme</name>
        <dbReference type="ChEBI" id="CHEBI:30413"/>
    </cofactor>
    <text evidence="1">Binds 1 heme group covalently.</text>
</comment>
<comment type="subunit">
    <text evidence="1">The 4 large subunits of the cytochrome b6-f complex are cytochrome b6, subunit IV (17 kDa polypeptide, PetD), cytochrome f and the Rieske protein, while the 4 small subunits are PetG, PetL, PetM and PetN. The complex functions as a dimer.</text>
</comment>
<comment type="subcellular location">
    <subcellularLocation>
        <location evidence="1">Cellular thylakoid membrane</location>
        <topology evidence="1">Single-pass membrane protein</topology>
    </subcellularLocation>
</comment>
<comment type="similarity">
    <text evidence="1">Belongs to the cytochrome f family.</text>
</comment>
<evidence type="ECO:0000255" key="1">
    <source>
        <dbReference type="HAMAP-Rule" id="MF_00610"/>
    </source>
</evidence>
<name>CYF_SYNEL</name>
<feature type="signal peptide" evidence="1">
    <location>
        <begin position="1"/>
        <end position="27"/>
    </location>
</feature>
<feature type="chain" id="PRO_0000023846" description="Cytochrome f">
    <location>
        <begin position="28"/>
        <end position="311"/>
    </location>
</feature>
<feature type="transmembrane region" description="Helical" evidence="1">
    <location>
        <begin position="279"/>
        <end position="296"/>
    </location>
</feature>
<feature type="binding site" description="axial binding residue" evidence="1">
    <location>
        <position position="28"/>
    </location>
    <ligand>
        <name>heme</name>
        <dbReference type="ChEBI" id="CHEBI:30413"/>
    </ligand>
    <ligandPart>
        <name>Fe</name>
        <dbReference type="ChEBI" id="CHEBI:18248"/>
    </ligandPart>
</feature>
<feature type="binding site" description="covalent" evidence="1">
    <location>
        <position position="48"/>
    </location>
    <ligand>
        <name>heme</name>
        <dbReference type="ChEBI" id="CHEBI:30413"/>
    </ligand>
</feature>
<feature type="binding site" description="covalent" evidence="1">
    <location>
        <position position="51"/>
    </location>
    <ligand>
        <name>heme</name>
        <dbReference type="ChEBI" id="CHEBI:30413"/>
    </ligand>
</feature>
<feature type="binding site" description="axial binding residue" evidence="1">
    <location>
        <position position="52"/>
    </location>
    <ligand>
        <name>heme</name>
        <dbReference type="ChEBI" id="CHEBI:30413"/>
    </ligand>
    <ligandPart>
        <name>Fe</name>
        <dbReference type="ChEBI" id="CHEBI:18248"/>
    </ligandPart>
</feature>
<organism>
    <name type="scientific">Synechococcus elongatus</name>
    <dbReference type="NCBI Taxonomy" id="32046"/>
    <lineage>
        <taxon>Bacteria</taxon>
        <taxon>Bacillati</taxon>
        <taxon>Cyanobacteriota</taxon>
        <taxon>Cyanophyceae</taxon>
        <taxon>Synechococcales</taxon>
        <taxon>Synechococcaceae</taxon>
        <taxon>Synechococcus</taxon>
    </lineage>
</organism>
<dbReference type="EMBL" id="AJ243535">
    <property type="protein sequence ID" value="CAB46650.1"/>
    <property type="molecule type" value="Genomic_DNA"/>
</dbReference>
<dbReference type="SMR" id="P0C8N4"/>
<dbReference type="GO" id="GO:0031676">
    <property type="term" value="C:plasma membrane-derived thylakoid membrane"/>
    <property type="evidence" value="ECO:0007669"/>
    <property type="project" value="UniProtKB-SubCell"/>
</dbReference>
<dbReference type="GO" id="GO:0009055">
    <property type="term" value="F:electron transfer activity"/>
    <property type="evidence" value="ECO:0007669"/>
    <property type="project" value="UniProtKB-UniRule"/>
</dbReference>
<dbReference type="GO" id="GO:0020037">
    <property type="term" value="F:heme binding"/>
    <property type="evidence" value="ECO:0007669"/>
    <property type="project" value="InterPro"/>
</dbReference>
<dbReference type="GO" id="GO:0005506">
    <property type="term" value="F:iron ion binding"/>
    <property type="evidence" value="ECO:0007669"/>
    <property type="project" value="InterPro"/>
</dbReference>
<dbReference type="GO" id="GO:0015979">
    <property type="term" value="P:photosynthesis"/>
    <property type="evidence" value="ECO:0007669"/>
    <property type="project" value="UniProtKB-UniRule"/>
</dbReference>
<dbReference type="FunFam" id="2.60.40.830:FF:000001">
    <property type="entry name" value="Cytochrome f"/>
    <property type="match status" value="1"/>
</dbReference>
<dbReference type="Gene3D" id="2.40.50.100">
    <property type="match status" value="1"/>
</dbReference>
<dbReference type="Gene3D" id="2.60.40.830">
    <property type="entry name" value="Cytochrome f large domain"/>
    <property type="match status" value="1"/>
</dbReference>
<dbReference type="Gene3D" id="1.20.5.700">
    <property type="entry name" value="Single helix bin"/>
    <property type="match status" value="1"/>
</dbReference>
<dbReference type="HAMAP" id="MF_00610">
    <property type="entry name" value="Cytb6_f_cytF"/>
    <property type="match status" value="1"/>
</dbReference>
<dbReference type="InterPro" id="IPR024058">
    <property type="entry name" value="Cyt-f_TM"/>
</dbReference>
<dbReference type="InterPro" id="IPR002325">
    <property type="entry name" value="Cyt_f"/>
</dbReference>
<dbReference type="InterPro" id="IPR024094">
    <property type="entry name" value="Cyt_f_lg_dom"/>
</dbReference>
<dbReference type="InterPro" id="IPR036826">
    <property type="entry name" value="Cyt_f_lg_dom_sf"/>
</dbReference>
<dbReference type="InterPro" id="IPR011054">
    <property type="entry name" value="Rudment_hybrid_motif"/>
</dbReference>
<dbReference type="NCBIfam" id="NF002736">
    <property type="entry name" value="PRK02693.1"/>
    <property type="match status" value="1"/>
</dbReference>
<dbReference type="PANTHER" id="PTHR33288">
    <property type="match status" value="1"/>
</dbReference>
<dbReference type="PANTHER" id="PTHR33288:SF10">
    <property type="entry name" value="CYTOCHROME F"/>
    <property type="match status" value="1"/>
</dbReference>
<dbReference type="Pfam" id="PF01333">
    <property type="entry name" value="Apocytochr_F_C"/>
    <property type="match status" value="1"/>
</dbReference>
<dbReference type="Pfam" id="PF16639">
    <property type="entry name" value="Apocytochr_F_N"/>
    <property type="match status" value="1"/>
</dbReference>
<dbReference type="PRINTS" id="PR00610">
    <property type="entry name" value="CYTOCHROMEF"/>
</dbReference>
<dbReference type="SUPFAM" id="SSF103431">
    <property type="entry name" value="Cytochrome f subunit of the cytochrome b6f complex, transmembrane anchor"/>
    <property type="match status" value="1"/>
</dbReference>
<dbReference type="SUPFAM" id="SSF49441">
    <property type="entry name" value="Cytochrome f, large domain"/>
    <property type="match status" value="1"/>
</dbReference>
<dbReference type="SUPFAM" id="SSF51246">
    <property type="entry name" value="Rudiment single hybrid motif"/>
    <property type="match status" value="1"/>
</dbReference>
<dbReference type="PROSITE" id="PS51010">
    <property type="entry name" value="CYTF"/>
    <property type="match status" value="1"/>
</dbReference>
<protein>
    <recommendedName>
        <fullName evidence="1">Cytochrome f</fullName>
    </recommendedName>
</protein>
<reference key="1">
    <citation type="journal article" date="2000" name="Biochim. Biophys. Acta">
        <title>Sequence of the two operons encoding the four core subunits of the cytochrome b6f complex from the thermophilic cyanobacterium Synechococcus elongatus.</title>
        <authorList>
            <person name="Schneider D."/>
            <person name="Altenfeld U."/>
            <person name="Thomas H."/>
            <person name="Schrader S."/>
            <person name="Muehlenhoff U."/>
            <person name="Roegner M."/>
        </authorList>
    </citation>
    <scope>NUCLEOTIDE SEQUENCE [GENOMIC DNA]</scope>
</reference>
<sequence>MKHFFKSLTLAIALAASVLFWSPQAQAYPFYAQQGYESPREATGRIVCANCHLAAKPIQVEVPQAVTPDSVFEAVVKIPYDTSVQQVLGDGSKGGLNVGAVLMLPEGFKIAPPDRLPEELQAKTSGIYYQPYSDDQQNIILVGPLPGEQYQEIVFPILAPNPGTDKSIHFGKYAVHAGGNRGRGQVYPNGEKSNNNVFTAPIAGTITSITPNPDGSTAVVITPENGEAVTETVPAGPELIVREGQTVVAGAALTNNPNVGGFGQKDTEIVLQDPNRIKWLLVFFAAITLSQILLVLKKKQVEKVQAAEMSF</sequence>
<keyword id="KW-0249">Electron transport</keyword>
<keyword id="KW-0349">Heme</keyword>
<keyword id="KW-0408">Iron</keyword>
<keyword id="KW-0472">Membrane</keyword>
<keyword id="KW-0479">Metal-binding</keyword>
<keyword id="KW-0602">Photosynthesis</keyword>
<keyword id="KW-0732">Signal</keyword>
<keyword id="KW-0793">Thylakoid</keyword>
<keyword id="KW-0812">Transmembrane</keyword>
<keyword id="KW-1133">Transmembrane helix</keyword>
<keyword id="KW-0813">Transport</keyword>
<gene>
    <name evidence="1" type="primary">petA</name>
</gene>
<accession>P0C8N4</accession>
<accession>Q9X9T1</accession>